<name>MURB_LEPIC</name>
<organism>
    <name type="scientific">Leptospira interrogans serogroup Icterohaemorrhagiae serovar copenhageni (strain Fiocruz L1-130)</name>
    <dbReference type="NCBI Taxonomy" id="267671"/>
    <lineage>
        <taxon>Bacteria</taxon>
        <taxon>Pseudomonadati</taxon>
        <taxon>Spirochaetota</taxon>
        <taxon>Spirochaetia</taxon>
        <taxon>Leptospirales</taxon>
        <taxon>Leptospiraceae</taxon>
        <taxon>Leptospira</taxon>
    </lineage>
</organism>
<dbReference type="EC" id="1.3.1.98" evidence="1"/>
<dbReference type="EMBL" id="AE016823">
    <property type="protein sequence ID" value="AAS71683.1"/>
    <property type="status" value="ALT_INIT"/>
    <property type="molecule type" value="Genomic_DNA"/>
</dbReference>
<dbReference type="RefSeq" id="WP_001978935.1">
    <property type="nucleotide sequence ID" value="NC_005823.1"/>
</dbReference>
<dbReference type="SMR" id="Q72MQ5"/>
<dbReference type="GeneID" id="61143010"/>
<dbReference type="KEGG" id="lic:LIC_13138"/>
<dbReference type="HOGENOM" id="CLU_035304_1_1_12"/>
<dbReference type="UniPathway" id="UPA00219"/>
<dbReference type="Proteomes" id="UP000007037">
    <property type="component" value="Chromosome I"/>
</dbReference>
<dbReference type="GO" id="GO:0005829">
    <property type="term" value="C:cytosol"/>
    <property type="evidence" value="ECO:0007669"/>
    <property type="project" value="TreeGrafter"/>
</dbReference>
<dbReference type="GO" id="GO:0071949">
    <property type="term" value="F:FAD binding"/>
    <property type="evidence" value="ECO:0007669"/>
    <property type="project" value="InterPro"/>
</dbReference>
<dbReference type="GO" id="GO:0008762">
    <property type="term" value="F:UDP-N-acetylmuramate dehydrogenase activity"/>
    <property type="evidence" value="ECO:0007669"/>
    <property type="project" value="UniProtKB-UniRule"/>
</dbReference>
<dbReference type="GO" id="GO:0051301">
    <property type="term" value="P:cell division"/>
    <property type="evidence" value="ECO:0007669"/>
    <property type="project" value="UniProtKB-KW"/>
</dbReference>
<dbReference type="GO" id="GO:0071555">
    <property type="term" value="P:cell wall organization"/>
    <property type="evidence" value="ECO:0007669"/>
    <property type="project" value="UniProtKB-KW"/>
</dbReference>
<dbReference type="GO" id="GO:0009252">
    <property type="term" value="P:peptidoglycan biosynthetic process"/>
    <property type="evidence" value="ECO:0007669"/>
    <property type="project" value="UniProtKB-UniRule"/>
</dbReference>
<dbReference type="GO" id="GO:0008360">
    <property type="term" value="P:regulation of cell shape"/>
    <property type="evidence" value="ECO:0007669"/>
    <property type="project" value="UniProtKB-KW"/>
</dbReference>
<dbReference type="Gene3D" id="3.30.465.10">
    <property type="match status" value="1"/>
</dbReference>
<dbReference type="Gene3D" id="3.90.78.10">
    <property type="entry name" value="UDP-N-acetylenolpyruvoylglucosamine reductase, C-terminal domain"/>
    <property type="match status" value="1"/>
</dbReference>
<dbReference type="Gene3D" id="3.30.43.10">
    <property type="entry name" value="Uridine Diphospho-n-acetylenolpyruvylglucosamine Reductase, domain 2"/>
    <property type="match status" value="1"/>
</dbReference>
<dbReference type="HAMAP" id="MF_00037">
    <property type="entry name" value="MurB"/>
    <property type="match status" value="1"/>
</dbReference>
<dbReference type="InterPro" id="IPR016166">
    <property type="entry name" value="FAD-bd_PCMH"/>
</dbReference>
<dbReference type="InterPro" id="IPR036318">
    <property type="entry name" value="FAD-bd_PCMH-like_sf"/>
</dbReference>
<dbReference type="InterPro" id="IPR016167">
    <property type="entry name" value="FAD-bd_PCMH_sub1"/>
</dbReference>
<dbReference type="InterPro" id="IPR016169">
    <property type="entry name" value="FAD-bd_PCMH_sub2"/>
</dbReference>
<dbReference type="InterPro" id="IPR003170">
    <property type="entry name" value="MurB"/>
</dbReference>
<dbReference type="InterPro" id="IPR011601">
    <property type="entry name" value="MurB_C"/>
</dbReference>
<dbReference type="InterPro" id="IPR036635">
    <property type="entry name" value="MurB_C_sf"/>
</dbReference>
<dbReference type="InterPro" id="IPR006094">
    <property type="entry name" value="Oxid_FAD_bind_N"/>
</dbReference>
<dbReference type="NCBIfam" id="TIGR00179">
    <property type="entry name" value="murB"/>
    <property type="match status" value="1"/>
</dbReference>
<dbReference type="NCBIfam" id="NF010480">
    <property type="entry name" value="PRK13905.1"/>
    <property type="match status" value="1"/>
</dbReference>
<dbReference type="PANTHER" id="PTHR21071">
    <property type="entry name" value="UDP-N-ACETYLENOLPYRUVOYLGLUCOSAMINE REDUCTASE"/>
    <property type="match status" value="1"/>
</dbReference>
<dbReference type="PANTHER" id="PTHR21071:SF4">
    <property type="entry name" value="UDP-N-ACETYLENOLPYRUVOYLGLUCOSAMINE REDUCTASE"/>
    <property type="match status" value="1"/>
</dbReference>
<dbReference type="Pfam" id="PF01565">
    <property type="entry name" value="FAD_binding_4"/>
    <property type="match status" value="1"/>
</dbReference>
<dbReference type="Pfam" id="PF02873">
    <property type="entry name" value="MurB_C"/>
    <property type="match status" value="1"/>
</dbReference>
<dbReference type="SUPFAM" id="SSF56176">
    <property type="entry name" value="FAD-binding/transporter-associated domain-like"/>
    <property type="match status" value="1"/>
</dbReference>
<dbReference type="SUPFAM" id="SSF56194">
    <property type="entry name" value="Uridine diphospho-N-Acetylenolpyruvylglucosamine reductase, MurB, C-terminal domain"/>
    <property type="match status" value="1"/>
</dbReference>
<dbReference type="PROSITE" id="PS51387">
    <property type="entry name" value="FAD_PCMH"/>
    <property type="match status" value="1"/>
</dbReference>
<reference key="1">
    <citation type="journal article" date="2004" name="J. Bacteriol.">
        <title>Comparative genomics of two Leptospira interrogans serovars reveals novel insights into physiology and pathogenesis.</title>
        <authorList>
            <person name="Nascimento A.L.T.O."/>
            <person name="Ko A.I."/>
            <person name="Martins E.A.L."/>
            <person name="Monteiro-Vitorello C.B."/>
            <person name="Ho P.L."/>
            <person name="Haake D.A."/>
            <person name="Verjovski-Almeida S."/>
            <person name="Hartskeerl R.A."/>
            <person name="Marques M.V."/>
            <person name="Oliveira M.C."/>
            <person name="Menck C.F.M."/>
            <person name="Leite L.C.C."/>
            <person name="Carrer H."/>
            <person name="Coutinho L.L."/>
            <person name="Degrave W.M."/>
            <person name="Dellagostin O.A."/>
            <person name="El-Dorry H."/>
            <person name="Ferro E.S."/>
            <person name="Ferro M.I.T."/>
            <person name="Furlan L.R."/>
            <person name="Gamberini M."/>
            <person name="Giglioti E.A."/>
            <person name="Goes-Neto A."/>
            <person name="Goldman G.H."/>
            <person name="Goldman M.H.S."/>
            <person name="Harakava R."/>
            <person name="Jeronimo S.M.B."/>
            <person name="Junqueira-de-Azevedo I.L.M."/>
            <person name="Kimura E.T."/>
            <person name="Kuramae E.E."/>
            <person name="Lemos E.G.M."/>
            <person name="Lemos M.V.F."/>
            <person name="Marino C.L."/>
            <person name="Nunes L.R."/>
            <person name="de Oliveira R.C."/>
            <person name="Pereira G.G."/>
            <person name="Reis M.S."/>
            <person name="Schriefer A."/>
            <person name="Siqueira W.J."/>
            <person name="Sommer P."/>
            <person name="Tsai S.M."/>
            <person name="Simpson A.J.G."/>
            <person name="Ferro J.A."/>
            <person name="Camargo L.E.A."/>
            <person name="Kitajima J.P."/>
            <person name="Setubal J.C."/>
            <person name="Van Sluys M.A."/>
        </authorList>
    </citation>
    <scope>NUCLEOTIDE SEQUENCE [LARGE SCALE GENOMIC DNA]</scope>
    <source>
        <strain>Fiocruz L1-130</strain>
    </source>
</reference>
<evidence type="ECO:0000255" key="1">
    <source>
        <dbReference type="HAMAP-Rule" id="MF_00037"/>
    </source>
</evidence>
<evidence type="ECO:0000256" key="2">
    <source>
        <dbReference type="SAM" id="MobiDB-lite"/>
    </source>
</evidence>
<evidence type="ECO:0000305" key="3"/>
<protein>
    <recommendedName>
        <fullName evidence="1">UDP-N-acetylenolpyruvoylglucosamine reductase</fullName>
        <ecNumber evidence="1">1.3.1.98</ecNumber>
    </recommendedName>
    <alternativeName>
        <fullName evidence="1">UDP-N-acetylmuramate dehydrogenase</fullName>
    </alternativeName>
</protein>
<feature type="chain" id="PRO_0000179223" description="UDP-N-acetylenolpyruvoylglucosamine reductase">
    <location>
        <begin position="1"/>
        <end position="318"/>
    </location>
</feature>
<feature type="domain" description="FAD-binding PCMH-type" evidence="1">
    <location>
        <begin position="38"/>
        <end position="204"/>
    </location>
</feature>
<feature type="region of interest" description="Disordered" evidence="2">
    <location>
        <begin position="212"/>
        <end position="232"/>
    </location>
</feature>
<feature type="compositionally biased region" description="Basic and acidic residues" evidence="2">
    <location>
        <begin position="212"/>
        <end position="229"/>
    </location>
</feature>
<feature type="active site" evidence="1">
    <location>
        <position position="182"/>
    </location>
</feature>
<feature type="active site" description="Proton donor" evidence="1">
    <location>
        <position position="233"/>
    </location>
</feature>
<feature type="active site" evidence="1">
    <location>
        <position position="310"/>
    </location>
</feature>
<proteinExistence type="inferred from homology"/>
<accession>Q72MQ5</accession>
<sequence length="318" mass="35324">MSPVLSESQLRDFKHTLESSKIPFRSEVRLGILSSFKIGGVCPVIVEPEISSQVSEILHIFSKFDIPWKILGGGSNLLISDHPDNFVTLRLSGKFKEFVSLGDGKFKIGAATNTTPTFRQISQLGYTGAEFLSTIPGWTGGAVIQNAGCYGGELFDLIESVEFLRNGEVFVRKPSEIKYGYRFTEFLNQKDSIILGIEILLKEGNLEEIESSLKDKRDRRNSSQPENKKSAGSVFKNPKVFREDGKEIKAWELLDQAGLRGQIKGGAQISPEHCNFIVNLGTATASDVHYLIDLVVDRVYQTSGILLNREIEFFGDIP</sequence>
<keyword id="KW-0131">Cell cycle</keyword>
<keyword id="KW-0132">Cell division</keyword>
<keyword id="KW-0133">Cell shape</keyword>
<keyword id="KW-0961">Cell wall biogenesis/degradation</keyword>
<keyword id="KW-0963">Cytoplasm</keyword>
<keyword id="KW-0274">FAD</keyword>
<keyword id="KW-0285">Flavoprotein</keyword>
<keyword id="KW-0521">NADP</keyword>
<keyword id="KW-0560">Oxidoreductase</keyword>
<keyword id="KW-0573">Peptidoglycan synthesis</keyword>
<gene>
    <name evidence="1" type="primary">murB</name>
    <name type="ordered locus">LIC_13138</name>
</gene>
<comment type="function">
    <text evidence="1">Cell wall formation.</text>
</comment>
<comment type="catalytic activity">
    <reaction evidence="1">
        <text>UDP-N-acetyl-alpha-D-muramate + NADP(+) = UDP-N-acetyl-3-O-(1-carboxyvinyl)-alpha-D-glucosamine + NADPH + H(+)</text>
        <dbReference type="Rhea" id="RHEA:12248"/>
        <dbReference type="ChEBI" id="CHEBI:15378"/>
        <dbReference type="ChEBI" id="CHEBI:57783"/>
        <dbReference type="ChEBI" id="CHEBI:58349"/>
        <dbReference type="ChEBI" id="CHEBI:68483"/>
        <dbReference type="ChEBI" id="CHEBI:70757"/>
        <dbReference type="EC" id="1.3.1.98"/>
    </reaction>
</comment>
<comment type="cofactor">
    <cofactor evidence="1">
        <name>FAD</name>
        <dbReference type="ChEBI" id="CHEBI:57692"/>
    </cofactor>
</comment>
<comment type="pathway">
    <text evidence="1">Cell wall biogenesis; peptidoglycan biosynthesis.</text>
</comment>
<comment type="subcellular location">
    <subcellularLocation>
        <location evidence="1">Cytoplasm</location>
    </subcellularLocation>
</comment>
<comment type="similarity">
    <text evidence="1">Belongs to the MurB family.</text>
</comment>
<comment type="sequence caution" evidence="3">
    <conflict type="erroneous initiation">
        <sequence resource="EMBL-CDS" id="AAS71683"/>
    </conflict>
</comment>